<protein>
    <recommendedName>
        <fullName evidence="2">Phosphate import ATP-binding protein PstB</fullName>
        <ecNumber evidence="2">7.3.2.1</ecNumber>
    </recommendedName>
    <alternativeName>
        <fullName evidence="2">ABC phosphate transporter</fullName>
    </alternativeName>
    <alternativeName>
        <fullName evidence="2">Phosphate-transporting ATPase</fullName>
    </alternativeName>
</protein>
<comment type="function">
    <text evidence="2">Part of the ABC transporter complex PstSACB involved in phosphate import. Responsible for energy coupling to the transport system.</text>
</comment>
<comment type="catalytic activity">
    <reaction evidence="2">
        <text>phosphate(out) + ATP + H2O = ADP + 2 phosphate(in) + H(+)</text>
        <dbReference type="Rhea" id="RHEA:24440"/>
        <dbReference type="ChEBI" id="CHEBI:15377"/>
        <dbReference type="ChEBI" id="CHEBI:15378"/>
        <dbReference type="ChEBI" id="CHEBI:30616"/>
        <dbReference type="ChEBI" id="CHEBI:43474"/>
        <dbReference type="ChEBI" id="CHEBI:456216"/>
        <dbReference type="EC" id="7.3.2.1"/>
    </reaction>
</comment>
<comment type="subunit">
    <text evidence="2">The complex is composed of two ATP-binding proteins (PstB), two transmembrane proteins (PstC and PstA) and a solute-binding protein (PstS).</text>
</comment>
<comment type="subcellular location">
    <subcellularLocation>
        <location evidence="2">Cell inner membrane</location>
        <topology evidence="2">Peripheral membrane protein</topology>
    </subcellularLocation>
</comment>
<comment type="similarity">
    <text evidence="2">Belongs to the ABC transporter superfamily. Phosphate importer (TC 3.A.1.7) family.</text>
</comment>
<name>PSTB_SALCH</name>
<feature type="initiator methionine" description="Removed" evidence="1">
    <location>
        <position position="1"/>
    </location>
</feature>
<feature type="chain" id="PRO_0000272521" description="Phosphate import ATP-binding protein PstB">
    <location>
        <begin position="2"/>
        <end position="257"/>
    </location>
</feature>
<feature type="domain" description="ABC transporter" evidence="2">
    <location>
        <begin position="11"/>
        <end position="252"/>
    </location>
</feature>
<feature type="binding site" evidence="2">
    <location>
        <begin position="43"/>
        <end position="50"/>
    </location>
    <ligand>
        <name>ATP</name>
        <dbReference type="ChEBI" id="CHEBI:30616"/>
    </ligand>
</feature>
<accession>Q57HY8</accession>
<evidence type="ECO:0000250" key="1"/>
<evidence type="ECO:0000255" key="2">
    <source>
        <dbReference type="HAMAP-Rule" id="MF_01702"/>
    </source>
</evidence>
<reference key="1">
    <citation type="journal article" date="2005" name="Nucleic Acids Res.">
        <title>The genome sequence of Salmonella enterica serovar Choleraesuis, a highly invasive and resistant zoonotic pathogen.</title>
        <authorList>
            <person name="Chiu C.-H."/>
            <person name="Tang P."/>
            <person name="Chu C."/>
            <person name="Hu S."/>
            <person name="Bao Q."/>
            <person name="Yu J."/>
            <person name="Chou Y.-Y."/>
            <person name="Wang H.-S."/>
            <person name="Lee Y.-S."/>
        </authorList>
    </citation>
    <scope>NUCLEOTIDE SEQUENCE [LARGE SCALE GENOMIC DNA]</scope>
    <source>
        <strain>SC-B67</strain>
    </source>
</reference>
<proteinExistence type="inferred from homology"/>
<dbReference type="EC" id="7.3.2.1" evidence="2"/>
<dbReference type="EMBL" id="AE017220">
    <property type="protein sequence ID" value="AAX67674.1"/>
    <property type="molecule type" value="Genomic_DNA"/>
</dbReference>
<dbReference type="RefSeq" id="WP_001541170.1">
    <property type="nucleotide sequence ID" value="NC_006905.1"/>
</dbReference>
<dbReference type="SMR" id="Q57HY8"/>
<dbReference type="KEGG" id="sec:SCH_3768"/>
<dbReference type="HOGENOM" id="CLU_000604_1_22_6"/>
<dbReference type="Proteomes" id="UP000000538">
    <property type="component" value="Chromosome"/>
</dbReference>
<dbReference type="GO" id="GO:0005886">
    <property type="term" value="C:plasma membrane"/>
    <property type="evidence" value="ECO:0007669"/>
    <property type="project" value="UniProtKB-SubCell"/>
</dbReference>
<dbReference type="GO" id="GO:0005524">
    <property type="term" value="F:ATP binding"/>
    <property type="evidence" value="ECO:0007669"/>
    <property type="project" value="UniProtKB-KW"/>
</dbReference>
<dbReference type="GO" id="GO:0016887">
    <property type="term" value="F:ATP hydrolysis activity"/>
    <property type="evidence" value="ECO:0007669"/>
    <property type="project" value="InterPro"/>
</dbReference>
<dbReference type="GO" id="GO:0015415">
    <property type="term" value="F:ATPase-coupled phosphate ion transmembrane transporter activity"/>
    <property type="evidence" value="ECO:0007669"/>
    <property type="project" value="UniProtKB-EC"/>
</dbReference>
<dbReference type="GO" id="GO:0035435">
    <property type="term" value="P:phosphate ion transmembrane transport"/>
    <property type="evidence" value="ECO:0007669"/>
    <property type="project" value="InterPro"/>
</dbReference>
<dbReference type="CDD" id="cd03260">
    <property type="entry name" value="ABC_PstB_phosphate_transporter"/>
    <property type="match status" value="1"/>
</dbReference>
<dbReference type="FunFam" id="3.40.50.300:FF:000132">
    <property type="entry name" value="Phosphate import ATP-binding protein PstB"/>
    <property type="match status" value="1"/>
</dbReference>
<dbReference type="Gene3D" id="3.40.50.300">
    <property type="entry name" value="P-loop containing nucleotide triphosphate hydrolases"/>
    <property type="match status" value="1"/>
</dbReference>
<dbReference type="InterPro" id="IPR003593">
    <property type="entry name" value="AAA+_ATPase"/>
</dbReference>
<dbReference type="InterPro" id="IPR003439">
    <property type="entry name" value="ABC_transporter-like_ATP-bd"/>
</dbReference>
<dbReference type="InterPro" id="IPR017871">
    <property type="entry name" value="ABC_transporter-like_CS"/>
</dbReference>
<dbReference type="InterPro" id="IPR027417">
    <property type="entry name" value="P-loop_NTPase"/>
</dbReference>
<dbReference type="InterPro" id="IPR005670">
    <property type="entry name" value="PstB-like"/>
</dbReference>
<dbReference type="NCBIfam" id="TIGR00972">
    <property type="entry name" value="3a0107s01c2"/>
    <property type="match status" value="1"/>
</dbReference>
<dbReference type="PANTHER" id="PTHR43423">
    <property type="entry name" value="ABC TRANSPORTER I FAMILY MEMBER 17"/>
    <property type="match status" value="1"/>
</dbReference>
<dbReference type="PANTHER" id="PTHR43423:SF3">
    <property type="entry name" value="PHOSPHATE IMPORT ATP-BINDING PROTEIN PSTB"/>
    <property type="match status" value="1"/>
</dbReference>
<dbReference type="Pfam" id="PF00005">
    <property type="entry name" value="ABC_tran"/>
    <property type="match status" value="1"/>
</dbReference>
<dbReference type="SMART" id="SM00382">
    <property type="entry name" value="AAA"/>
    <property type="match status" value="1"/>
</dbReference>
<dbReference type="SUPFAM" id="SSF52540">
    <property type="entry name" value="P-loop containing nucleoside triphosphate hydrolases"/>
    <property type="match status" value="1"/>
</dbReference>
<dbReference type="PROSITE" id="PS00211">
    <property type="entry name" value="ABC_TRANSPORTER_1"/>
    <property type="match status" value="1"/>
</dbReference>
<dbReference type="PROSITE" id="PS50893">
    <property type="entry name" value="ABC_TRANSPORTER_2"/>
    <property type="match status" value="1"/>
</dbReference>
<dbReference type="PROSITE" id="PS51238">
    <property type="entry name" value="PSTB"/>
    <property type="match status" value="1"/>
</dbReference>
<organism>
    <name type="scientific">Salmonella choleraesuis (strain SC-B67)</name>
    <dbReference type="NCBI Taxonomy" id="321314"/>
    <lineage>
        <taxon>Bacteria</taxon>
        <taxon>Pseudomonadati</taxon>
        <taxon>Pseudomonadota</taxon>
        <taxon>Gammaproteobacteria</taxon>
        <taxon>Enterobacterales</taxon>
        <taxon>Enterobacteriaceae</taxon>
        <taxon>Salmonella</taxon>
    </lineage>
</organism>
<keyword id="KW-0067">ATP-binding</keyword>
<keyword id="KW-0997">Cell inner membrane</keyword>
<keyword id="KW-1003">Cell membrane</keyword>
<keyword id="KW-0472">Membrane</keyword>
<keyword id="KW-0547">Nucleotide-binding</keyword>
<keyword id="KW-0592">Phosphate transport</keyword>
<keyword id="KW-1278">Translocase</keyword>
<keyword id="KW-0813">Transport</keyword>
<gene>
    <name evidence="2" type="primary">pstB</name>
    <name type="ordered locus">SCH_3768</name>
</gene>
<sequence>MSMVETAPSKIQVRDLNFYYGKFHALKNINLDIAKNQVTAFIGPSGSGKSTLLRTFNKMYSLYPEQRAEGEILLDGDNILTNTQDIALLRAKVGMVFQKPTPFPMSIYDNIAFGVRLFEKLFRADMDERVQWALTKAALWNETKDKLHQSGYSLSGGQQQRLCIARGIAIRPEVLLLDEPCSALDPISTGRIEELITELKQDYTVVIVTHNMQQAARCSDHTAFMYLGELIEFSNTDDLFTKPAKKQTEDYITGRYG</sequence>